<comment type="function">
    <text evidence="1">Succinyl-CoA synthetase functions in the citric acid cycle (TCA), coupling the hydrolysis of succinyl-CoA to the synthesis of either ATP or GTP and thus represents the only step of substrate-level phosphorylation in the TCA. The beta subunit provides nucleotide specificity of the enzyme and binds the substrate succinate, while the binding sites for coenzyme A and phosphate are found in the alpha subunit.</text>
</comment>
<comment type="catalytic activity">
    <reaction evidence="1">
        <text>succinate + ATP + CoA = succinyl-CoA + ADP + phosphate</text>
        <dbReference type="Rhea" id="RHEA:17661"/>
        <dbReference type="ChEBI" id="CHEBI:30031"/>
        <dbReference type="ChEBI" id="CHEBI:30616"/>
        <dbReference type="ChEBI" id="CHEBI:43474"/>
        <dbReference type="ChEBI" id="CHEBI:57287"/>
        <dbReference type="ChEBI" id="CHEBI:57292"/>
        <dbReference type="ChEBI" id="CHEBI:456216"/>
        <dbReference type="EC" id="6.2.1.5"/>
    </reaction>
    <physiologicalReaction direction="right-to-left" evidence="1">
        <dbReference type="Rhea" id="RHEA:17663"/>
    </physiologicalReaction>
</comment>
<comment type="catalytic activity">
    <reaction evidence="1">
        <text>GTP + succinate + CoA = succinyl-CoA + GDP + phosphate</text>
        <dbReference type="Rhea" id="RHEA:22120"/>
        <dbReference type="ChEBI" id="CHEBI:30031"/>
        <dbReference type="ChEBI" id="CHEBI:37565"/>
        <dbReference type="ChEBI" id="CHEBI:43474"/>
        <dbReference type="ChEBI" id="CHEBI:57287"/>
        <dbReference type="ChEBI" id="CHEBI:57292"/>
        <dbReference type="ChEBI" id="CHEBI:58189"/>
    </reaction>
    <physiologicalReaction direction="right-to-left" evidence="1">
        <dbReference type="Rhea" id="RHEA:22122"/>
    </physiologicalReaction>
</comment>
<comment type="cofactor">
    <cofactor evidence="1">
        <name>Mg(2+)</name>
        <dbReference type="ChEBI" id="CHEBI:18420"/>
    </cofactor>
    <text evidence="1">Binds 1 Mg(2+) ion per subunit.</text>
</comment>
<comment type="pathway">
    <text evidence="1">Carbohydrate metabolism; tricarboxylic acid cycle; succinate from succinyl-CoA (ligase route): step 1/1.</text>
</comment>
<comment type="subunit">
    <text evidence="1">Heterotetramer of two alpha and two beta subunits.</text>
</comment>
<comment type="similarity">
    <text evidence="1">Belongs to the succinate/malate CoA ligase beta subunit family.</text>
</comment>
<evidence type="ECO:0000255" key="1">
    <source>
        <dbReference type="HAMAP-Rule" id="MF_00558"/>
    </source>
</evidence>
<keyword id="KW-0067">ATP-binding</keyword>
<keyword id="KW-0436">Ligase</keyword>
<keyword id="KW-0460">Magnesium</keyword>
<keyword id="KW-0479">Metal-binding</keyword>
<keyword id="KW-0547">Nucleotide-binding</keyword>
<keyword id="KW-1185">Reference proteome</keyword>
<keyword id="KW-0816">Tricarboxylic acid cycle</keyword>
<name>SUCC_HALMA</name>
<organism>
    <name type="scientific">Haloarcula marismortui (strain ATCC 43049 / DSM 3752 / JCM 8966 / VKM B-1809)</name>
    <name type="common">Halobacterium marismortui</name>
    <dbReference type="NCBI Taxonomy" id="272569"/>
    <lineage>
        <taxon>Archaea</taxon>
        <taxon>Methanobacteriati</taxon>
        <taxon>Methanobacteriota</taxon>
        <taxon>Stenosarchaea group</taxon>
        <taxon>Halobacteria</taxon>
        <taxon>Halobacteriales</taxon>
        <taxon>Haloarculaceae</taxon>
        <taxon>Haloarcula</taxon>
    </lineage>
</organism>
<protein>
    <recommendedName>
        <fullName evidence="1">Succinate--CoA ligase [ADP-forming] subunit beta</fullName>
        <ecNumber evidence="1">6.2.1.5</ecNumber>
    </recommendedName>
    <alternativeName>
        <fullName evidence="1">Succinyl-CoA synthetase subunit beta</fullName>
        <shortName evidence="1">SCS-beta</shortName>
    </alternativeName>
</protein>
<gene>
    <name evidence="1" type="primary">sucC</name>
    <name type="ordered locus">rrnAC0472</name>
</gene>
<proteinExistence type="inferred from homology"/>
<sequence>MRLHEYQAKQVFADAGIPTPASQLAETVDEAVDAAEEIGYPVAIKAQVHVGGRGKAGGIKLVESKEEAREAAEDIIGMDLKGYHVSKVLVEEAVDFVNELYVGVTMDRGEGRPVAMVSTKGGVNIEEVAEEDPDAIAREHIDPAFGMHPFQARKVVYEAGVDREVANDVASVLTTLYQLWDDRDGADTEINPLMITSDDEVIAADAVMNVDGDALFRQPEIAEMGEEAAEGDELEQKADEYGFDYVRLDGNVGIIGNGAGLVMTTLDLVDYYDGEPANFLDVGGGAKADRIANALDMVFSDENVDSVVFNIFGGITRGDEVANGINQALEQFDEIPKPVTVRLAGTNAEEGMEILNEDLVTVEHTLEDAVQRAVEYAKEVEA</sequence>
<accession>Q5V4Q4</accession>
<dbReference type="EC" id="6.2.1.5" evidence="1"/>
<dbReference type="EMBL" id="AY596297">
    <property type="protein sequence ID" value="AAV45498.1"/>
    <property type="molecule type" value="Genomic_DNA"/>
</dbReference>
<dbReference type="RefSeq" id="WP_004962343.1">
    <property type="nucleotide sequence ID" value="NZ_CP039138.1"/>
</dbReference>
<dbReference type="SMR" id="Q5V4Q4"/>
<dbReference type="STRING" id="272569.rrnAC0472"/>
<dbReference type="PaxDb" id="272569-rrnAC0472"/>
<dbReference type="EnsemblBacteria" id="AAV45498">
    <property type="protein sequence ID" value="AAV45498"/>
    <property type="gene ID" value="rrnAC0472"/>
</dbReference>
<dbReference type="GeneID" id="64822819"/>
<dbReference type="KEGG" id="hma:rrnAC0472"/>
<dbReference type="PATRIC" id="fig|272569.17.peg.1242"/>
<dbReference type="eggNOG" id="arCOG01337">
    <property type="taxonomic scope" value="Archaea"/>
</dbReference>
<dbReference type="HOGENOM" id="CLU_037430_0_2_2"/>
<dbReference type="UniPathway" id="UPA00223">
    <property type="reaction ID" value="UER00999"/>
</dbReference>
<dbReference type="Proteomes" id="UP000001169">
    <property type="component" value="Chromosome I"/>
</dbReference>
<dbReference type="GO" id="GO:0042709">
    <property type="term" value="C:succinate-CoA ligase complex"/>
    <property type="evidence" value="ECO:0007669"/>
    <property type="project" value="TreeGrafter"/>
</dbReference>
<dbReference type="GO" id="GO:0005524">
    <property type="term" value="F:ATP binding"/>
    <property type="evidence" value="ECO:0007669"/>
    <property type="project" value="UniProtKB-UniRule"/>
</dbReference>
<dbReference type="GO" id="GO:0000287">
    <property type="term" value="F:magnesium ion binding"/>
    <property type="evidence" value="ECO:0007669"/>
    <property type="project" value="UniProtKB-UniRule"/>
</dbReference>
<dbReference type="GO" id="GO:0004775">
    <property type="term" value="F:succinate-CoA ligase (ADP-forming) activity"/>
    <property type="evidence" value="ECO:0007669"/>
    <property type="project" value="UniProtKB-UniRule"/>
</dbReference>
<dbReference type="GO" id="GO:0004776">
    <property type="term" value="F:succinate-CoA ligase (GDP-forming) activity"/>
    <property type="evidence" value="ECO:0007669"/>
    <property type="project" value="RHEA"/>
</dbReference>
<dbReference type="GO" id="GO:0006104">
    <property type="term" value="P:succinyl-CoA metabolic process"/>
    <property type="evidence" value="ECO:0007669"/>
    <property type="project" value="TreeGrafter"/>
</dbReference>
<dbReference type="GO" id="GO:0006099">
    <property type="term" value="P:tricarboxylic acid cycle"/>
    <property type="evidence" value="ECO:0007669"/>
    <property type="project" value="UniProtKB-UniRule"/>
</dbReference>
<dbReference type="FunFam" id="3.30.470.20:FF:000002">
    <property type="entry name" value="Succinate--CoA ligase [ADP-forming] subunit beta"/>
    <property type="match status" value="1"/>
</dbReference>
<dbReference type="FunFam" id="3.40.50.261:FF:000007">
    <property type="entry name" value="Succinate--CoA ligase [ADP-forming] subunit beta"/>
    <property type="match status" value="1"/>
</dbReference>
<dbReference type="Gene3D" id="3.30.1490.20">
    <property type="entry name" value="ATP-grasp fold, A domain"/>
    <property type="match status" value="1"/>
</dbReference>
<dbReference type="Gene3D" id="3.30.470.20">
    <property type="entry name" value="ATP-grasp fold, B domain"/>
    <property type="match status" value="1"/>
</dbReference>
<dbReference type="Gene3D" id="3.40.50.261">
    <property type="entry name" value="Succinyl-CoA synthetase domains"/>
    <property type="match status" value="1"/>
</dbReference>
<dbReference type="HAMAP" id="MF_00558">
    <property type="entry name" value="Succ_CoA_beta"/>
    <property type="match status" value="1"/>
</dbReference>
<dbReference type="InterPro" id="IPR011761">
    <property type="entry name" value="ATP-grasp"/>
</dbReference>
<dbReference type="InterPro" id="IPR013650">
    <property type="entry name" value="ATP-grasp_succ-CoA_synth-type"/>
</dbReference>
<dbReference type="InterPro" id="IPR013815">
    <property type="entry name" value="ATP_grasp_subdomain_1"/>
</dbReference>
<dbReference type="InterPro" id="IPR017866">
    <property type="entry name" value="Succ-CoA_synthase_bsu_CS"/>
</dbReference>
<dbReference type="InterPro" id="IPR005811">
    <property type="entry name" value="SUCC_ACL_C"/>
</dbReference>
<dbReference type="InterPro" id="IPR005809">
    <property type="entry name" value="Succ_CoA_ligase-like_bsu"/>
</dbReference>
<dbReference type="InterPro" id="IPR016102">
    <property type="entry name" value="Succinyl-CoA_synth-like"/>
</dbReference>
<dbReference type="NCBIfam" id="NF001913">
    <property type="entry name" value="PRK00696.1"/>
    <property type="match status" value="1"/>
</dbReference>
<dbReference type="NCBIfam" id="TIGR01016">
    <property type="entry name" value="sucCoAbeta"/>
    <property type="match status" value="1"/>
</dbReference>
<dbReference type="PANTHER" id="PTHR11815:SF10">
    <property type="entry name" value="SUCCINATE--COA LIGASE [GDP-FORMING] SUBUNIT BETA, MITOCHONDRIAL"/>
    <property type="match status" value="1"/>
</dbReference>
<dbReference type="PANTHER" id="PTHR11815">
    <property type="entry name" value="SUCCINYL-COA SYNTHETASE BETA CHAIN"/>
    <property type="match status" value="1"/>
</dbReference>
<dbReference type="Pfam" id="PF08442">
    <property type="entry name" value="ATP-grasp_2"/>
    <property type="match status" value="1"/>
</dbReference>
<dbReference type="Pfam" id="PF00549">
    <property type="entry name" value="Ligase_CoA"/>
    <property type="match status" value="1"/>
</dbReference>
<dbReference type="PIRSF" id="PIRSF001554">
    <property type="entry name" value="SucCS_beta"/>
    <property type="match status" value="1"/>
</dbReference>
<dbReference type="SUPFAM" id="SSF56059">
    <property type="entry name" value="Glutathione synthetase ATP-binding domain-like"/>
    <property type="match status" value="1"/>
</dbReference>
<dbReference type="SUPFAM" id="SSF52210">
    <property type="entry name" value="Succinyl-CoA synthetase domains"/>
    <property type="match status" value="1"/>
</dbReference>
<dbReference type="PROSITE" id="PS50975">
    <property type="entry name" value="ATP_GRASP"/>
    <property type="match status" value="1"/>
</dbReference>
<dbReference type="PROSITE" id="PS01217">
    <property type="entry name" value="SUCCINYL_COA_LIG_3"/>
    <property type="match status" value="1"/>
</dbReference>
<feature type="chain" id="PRO_1000082104" description="Succinate--CoA ligase [ADP-forming] subunit beta">
    <location>
        <begin position="1"/>
        <end position="382"/>
    </location>
</feature>
<feature type="domain" description="ATP-grasp" evidence="1">
    <location>
        <begin position="9"/>
        <end position="237"/>
    </location>
</feature>
<feature type="binding site" evidence="1">
    <location>
        <position position="45"/>
    </location>
    <ligand>
        <name>ATP</name>
        <dbReference type="ChEBI" id="CHEBI:30616"/>
    </ligand>
</feature>
<feature type="binding site" evidence="1">
    <location>
        <begin position="52"/>
        <end position="54"/>
    </location>
    <ligand>
        <name>ATP</name>
        <dbReference type="ChEBI" id="CHEBI:30616"/>
    </ligand>
</feature>
<feature type="binding site" evidence="1">
    <location>
        <position position="91"/>
    </location>
    <ligand>
        <name>ATP</name>
        <dbReference type="ChEBI" id="CHEBI:30616"/>
    </ligand>
</feature>
<feature type="binding site" evidence="1">
    <location>
        <position position="94"/>
    </location>
    <ligand>
        <name>ATP</name>
        <dbReference type="ChEBI" id="CHEBI:30616"/>
    </ligand>
</feature>
<feature type="binding site" evidence="1">
    <location>
        <position position="99"/>
    </location>
    <ligand>
        <name>ATP</name>
        <dbReference type="ChEBI" id="CHEBI:30616"/>
    </ligand>
</feature>
<feature type="binding site" evidence="1">
    <location>
        <position position="191"/>
    </location>
    <ligand>
        <name>Mg(2+)</name>
        <dbReference type="ChEBI" id="CHEBI:18420"/>
    </ligand>
</feature>
<feature type="binding site" evidence="1">
    <location>
        <position position="205"/>
    </location>
    <ligand>
        <name>Mg(2+)</name>
        <dbReference type="ChEBI" id="CHEBI:18420"/>
    </ligand>
</feature>
<feature type="binding site" evidence="1">
    <location>
        <position position="257"/>
    </location>
    <ligand>
        <name>substrate</name>
        <note>ligand shared with subunit alpha</note>
    </ligand>
</feature>
<feature type="binding site" evidence="1">
    <location>
        <begin position="314"/>
        <end position="316"/>
    </location>
    <ligand>
        <name>substrate</name>
        <note>ligand shared with subunit alpha</note>
    </ligand>
</feature>
<reference key="1">
    <citation type="journal article" date="2004" name="Genome Res.">
        <title>Genome sequence of Haloarcula marismortui: a halophilic archaeon from the Dead Sea.</title>
        <authorList>
            <person name="Baliga N.S."/>
            <person name="Bonneau R."/>
            <person name="Facciotti M.T."/>
            <person name="Pan M."/>
            <person name="Glusman G."/>
            <person name="Deutsch E.W."/>
            <person name="Shannon P."/>
            <person name="Chiu Y."/>
            <person name="Weng R.S."/>
            <person name="Gan R.R."/>
            <person name="Hung P."/>
            <person name="Date S.V."/>
            <person name="Marcotte E."/>
            <person name="Hood L."/>
            <person name="Ng W.V."/>
        </authorList>
    </citation>
    <scope>NUCLEOTIDE SEQUENCE [LARGE SCALE GENOMIC DNA]</scope>
    <source>
        <strain>ATCC 43049 / DSM 3752 / JCM 8966 / VKM B-1809</strain>
    </source>
</reference>